<gene>
    <name evidence="4" type="primary">hsp-110</name>
    <name type="ORF">C30C11.4</name>
</gene>
<proteinExistence type="inferred from homology"/>
<accession>Q05036</accession>
<dbReference type="EMBL" id="FO080722">
    <property type="protein sequence ID" value="CCD66159.1"/>
    <property type="molecule type" value="Genomic_DNA"/>
</dbReference>
<dbReference type="PIR" id="S44784">
    <property type="entry name" value="S44784"/>
</dbReference>
<dbReference type="RefSeq" id="NP_498868.1">
    <property type="nucleotide sequence ID" value="NM_066467.7"/>
</dbReference>
<dbReference type="SMR" id="Q05036"/>
<dbReference type="BioGRID" id="41399">
    <property type="interactions" value="44"/>
</dbReference>
<dbReference type="DIP" id="DIP-24507N"/>
<dbReference type="FunCoup" id="Q05036">
    <property type="interactions" value="3454"/>
</dbReference>
<dbReference type="STRING" id="6239.C30C11.4.2"/>
<dbReference type="iPTMnet" id="Q05036"/>
<dbReference type="PaxDb" id="6239-C30C11.4.1"/>
<dbReference type="PeptideAtlas" id="Q05036"/>
<dbReference type="EnsemblMetazoa" id="C30C11.4.1">
    <property type="protein sequence ID" value="C30C11.4.1"/>
    <property type="gene ID" value="WBGene00016250"/>
</dbReference>
<dbReference type="GeneID" id="176195"/>
<dbReference type="KEGG" id="cel:CELE_C30C11.4"/>
<dbReference type="UCSC" id="C30C11.4.1">
    <property type="organism name" value="c. elegans"/>
</dbReference>
<dbReference type="AGR" id="WB:WBGene00016250"/>
<dbReference type="CTD" id="176195"/>
<dbReference type="WormBase" id="C30C11.4">
    <property type="protein sequence ID" value="CE00103"/>
    <property type="gene ID" value="WBGene00016250"/>
    <property type="gene designation" value="hsp-110"/>
</dbReference>
<dbReference type="eggNOG" id="KOG0103">
    <property type="taxonomic scope" value="Eukaryota"/>
</dbReference>
<dbReference type="GeneTree" id="ENSGT00940000168707"/>
<dbReference type="HOGENOM" id="CLU_005965_5_1_1"/>
<dbReference type="InParanoid" id="Q05036"/>
<dbReference type="OMA" id="WEQSPEI"/>
<dbReference type="OrthoDB" id="434160at2759"/>
<dbReference type="PhylomeDB" id="Q05036"/>
<dbReference type="Reactome" id="R-CEL-3371453">
    <property type="pathway name" value="Regulation of HSF1-mediated heat shock response"/>
</dbReference>
<dbReference type="PRO" id="PR:Q05036"/>
<dbReference type="Proteomes" id="UP000001940">
    <property type="component" value="Chromosome III"/>
</dbReference>
<dbReference type="Bgee" id="WBGene00016250">
    <property type="expression patterns" value="Expressed in germ line (C elegans) and 4 other cell types or tissues"/>
</dbReference>
<dbReference type="GO" id="GO:0005829">
    <property type="term" value="C:cytosol"/>
    <property type="evidence" value="ECO:0000318"/>
    <property type="project" value="GO_Central"/>
</dbReference>
<dbReference type="GO" id="GO:0005634">
    <property type="term" value="C:nucleus"/>
    <property type="evidence" value="ECO:0000318"/>
    <property type="project" value="GO_Central"/>
</dbReference>
<dbReference type="GO" id="GO:0000774">
    <property type="term" value="F:adenyl-nucleotide exchange factor activity"/>
    <property type="evidence" value="ECO:0000318"/>
    <property type="project" value="GO_Central"/>
</dbReference>
<dbReference type="GO" id="GO:0005524">
    <property type="term" value="F:ATP binding"/>
    <property type="evidence" value="ECO:0007669"/>
    <property type="project" value="UniProtKB-KW"/>
</dbReference>
<dbReference type="GO" id="GO:0140662">
    <property type="term" value="F:ATP-dependent protein folding chaperone"/>
    <property type="evidence" value="ECO:0007669"/>
    <property type="project" value="InterPro"/>
</dbReference>
<dbReference type="GO" id="GO:0008340">
    <property type="term" value="P:determination of adult lifespan"/>
    <property type="evidence" value="ECO:0000316"/>
    <property type="project" value="WormBase"/>
</dbReference>
<dbReference type="GO" id="GO:0006457">
    <property type="term" value="P:protein folding"/>
    <property type="evidence" value="ECO:0000315"/>
    <property type="project" value="WormBase"/>
</dbReference>
<dbReference type="GO" id="GO:0035966">
    <property type="term" value="P:response to topologically incorrect protein"/>
    <property type="evidence" value="ECO:0000315"/>
    <property type="project" value="WormBase"/>
</dbReference>
<dbReference type="CDD" id="cd10228">
    <property type="entry name" value="ASKHA_NBD_HSP70_HSPA4_like"/>
    <property type="match status" value="1"/>
</dbReference>
<dbReference type="FunFam" id="1.20.1270.10:FF:000002">
    <property type="entry name" value="Heat shock 70 kDa protein 4"/>
    <property type="match status" value="1"/>
</dbReference>
<dbReference type="FunFam" id="3.30.30.30:FF:000002">
    <property type="entry name" value="Heat shock 70 kDa protein 4"/>
    <property type="match status" value="1"/>
</dbReference>
<dbReference type="FunFam" id="3.30.420.40:FF:000171">
    <property type="entry name" value="Heat shock 70 kDa protein 4"/>
    <property type="match status" value="2"/>
</dbReference>
<dbReference type="FunFam" id="3.90.640.10:FF:000004">
    <property type="entry name" value="Heat shock 70 kDa protein 4"/>
    <property type="match status" value="1"/>
</dbReference>
<dbReference type="Gene3D" id="1.20.1270.10">
    <property type="match status" value="2"/>
</dbReference>
<dbReference type="Gene3D" id="3.30.30.30">
    <property type="match status" value="1"/>
</dbReference>
<dbReference type="Gene3D" id="3.30.420.40">
    <property type="match status" value="2"/>
</dbReference>
<dbReference type="Gene3D" id="3.90.640.10">
    <property type="entry name" value="Actin, Chain A, domain 4"/>
    <property type="match status" value="1"/>
</dbReference>
<dbReference type="Gene3D" id="2.60.34.10">
    <property type="entry name" value="Substrate Binding Domain Of DNAk, Chain A, domain 1"/>
    <property type="match status" value="1"/>
</dbReference>
<dbReference type="InterPro" id="IPR043129">
    <property type="entry name" value="ATPase_NBD"/>
</dbReference>
<dbReference type="InterPro" id="IPR018181">
    <property type="entry name" value="Heat_shock_70_CS"/>
</dbReference>
<dbReference type="InterPro" id="IPR029048">
    <property type="entry name" value="HSP70_C_sf"/>
</dbReference>
<dbReference type="InterPro" id="IPR029047">
    <property type="entry name" value="HSP70_peptide-bd_sf"/>
</dbReference>
<dbReference type="InterPro" id="IPR013126">
    <property type="entry name" value="Hsp_70_fam"/>
</dbReference>
<dbReference type="PANTHER" id="PTHR45639:SF4">
    <property type="entry name" value="HSC70CB, ISOFORM G"/>
    <property type="match status" value="1"/>
</dbReference>
<dbReference type="PANTHER" id="PTHR45639">
    <property type="entry name" value="HSC70CB, ISOFORM G-RELATED"/>
    <property type="match status" value="1"/>
</dbReference>
<dbReference type="Pfam" id="PF00012">
    <property type="entry name" value="HSP70"/>
    <property type="match status" value="1"/>
</dbReference>
<dbReference type="PRINTS" id="PR00301">
    <property type="entry name" value="HEATSHOCK70"/>
</dbReference>
<dbReference type="SUPFAM" id="SSF53067">
    <property type="entry name" value="Actin-like ATPase domain"/>
    <property type="match status" value="2"/>
</dbReference>
<dbReference type="SUPFAM" id="SSF100934">
    <property type="entry name" value="Heat shock protein 70kD (HSP70), C-terminal subdomain"/>
    <property type="match status" value="2"/>
</dbReference>
<dbReference type="SUPFAM" id="SSF100920">
    <property type="entry name" value="Heat shock protein 70kD (HSP70), peptide-binding domain"/>
    <property type="match status" value="1"/>
</dbReference>
<dbReference type="PROSITE" id="PS00329">
    <property type="entry name" value="HSP70_2"/>
    <property type="match status" value="1"/>
</dbReference>
<dbReference type="PROSITE" id="PS01036">
    <property type="entry name" value="HSP70_3"/>
    <property type="match status" value="1"/>
</dbReference>
<organism>
    <name type="scientific">Caenorhabditis elegans</name>
    <dbReference type="NCBI Taxonomy" id="6239"/>
    <lineage>
        <taxon>Eukaryota</taxon>
        <taxon>Metazoa</taxon>
        <taxon>Ecdysozoa</taxon>
        <taxon>Nematoda</taxon>
        <taxon>Chromadorea</taxon>
        <taxon>Rhabditida</taxon>
        <taxon>Rhabditina</taxon>
        <taxon>Rhabditomorpha</taxon>
        <taxon>Rhabditoidea</taxon>
        <taxon>Rhabditidae</taxon>
        <taxon>Peloderinae</taxon>
        <taxon>Caenorhabditis</taxon>
    </lineage>
</organism>
<feature type="chain" id="PRO_0000078299" description="Heat shock protein 110" evidence="3">
    <location>
        <begin position="1"/>
        <end position="776"/>
    </location>
</feature>
<feature type="region of interest" description="Disordered" evidence="1">
    <location>
        <begin position="741"/>
        <end position="776"/>
    </location>
</feature>
<name>HS110_CAEEL</name>
<evidence type="ECO:0000256" key="1">
    <source>
        <dbReference type="SAM" id="MobiDB-lite"/>
    </source>
</evidence>
<evidence type="ECO:0000269" key="2">
    <source>
    </source>
</evidence>
<evidence type="ECO:0000305" key="3"/>
<evidence type="ECO:0000312" key="4">
    <source>
        <dbReference type="WormBase" id="C30C11.4"/>
    </source>
</evidence>
<sequence length="776" mass="86897">MSVLGFDIGNLNCYIGVARQGGIEVITNDYSLHATPACVSFGPKDRSMGVAARQAVTTNIKNTVINFKHLIGRKFSDPVAQRFIPFIPCKVVKLPNDDIGVQVSYLGEPHTFTPEQVLAALLTKLRTIVESQLSDVKKVSDCVLAVPSYFTDVQRRAVLSAIQYAGLNSLRIVNETTAIALAYGIYKQDLPEEDAKSRNVVFLDIGHSSTQASLVAFNRGKLQMVNTSYDLESGGIWFDALIREHFRKEFKTKYGIDAATSPRPWLRLLDECERVKKQMSANQTPIPLNIECFMEDKDVTGKMQRQEFEDLAAPIFNRIKQVLINLFADGVSIKPEEIDEIEIVGGSSRIPMIREIVKDLFGKEPKTTMNQDEAVARGAAMQCAILSPTFRVREFAIKDTQPYRIRLSWNSTGENGGENDVFSPRDEVPFSKLVSLLRSGPFNVEAHYAQPNVVPHNQVHIGSWKVNGARPGADGGNQKVKVKVRVNPDGIFTIASATMYEPRIVEEVPAEAMEVDGDAKTEAPAEPLEPVKKTKLVPVDLEVIESIPVSYDVQKFHNLELQMQESDAREKAKADAKNSLEEYVYEMRDKVSDQYAEFITPAAADEFRSVLTSTEDWLYDEGEDAERDVYEKRLSELKAVGTPVVERYRESETRKPAFDSFDQSIMRVRKAYEDYANGGPTYAHLDSKEMEKVINAIEDKKKWLDEARHKQETRSKTDAPVVFTEEILQNKNVFENVVNPILNKKKPAAPAPPKKEEPQPAAGDQPQSQPGEMDVD</sequence>
<keyword id="KW-0067">ATP-binding</keyword>
<keyword id="KW-0547">Nucleotide-binding</keyword>
<keyword id="KW-1185">Reference proteome</keyword>
<comment type="disruption phenotype">
    <text evidence="2">RNAi-mediated knockdown in a sod-1 mutant background results in increased aggregation of denatured proteins in neurons.</text>
</comment>
<comment type="similarity">
    <text evidence="3">Belongs to the heat shock protein 70 family.</text>
</comment>
<protein>
    <recommendedName>
        <fullName evidence="4">Heat shock protein 110</fullName>
    </recommendedName>
</protein>
<reference key="1">
    <citation type="journal article" date="1994" name="Nature">
        <title>2.2 Mb of contiguous nucleotide sequence from chromosome III of C. elegans.</title>
        <authorList>
            <person name="Wilson R."/>
            <person name="Ainscough R."/>
            <person name="Anderson K."/>
            <person name="Baynes C."/>
            <person name="Berks M."/>
            <person name="Bonfield J."/>
            <person name="Burton J."/>
            <person name="Connell M."/>
            <person name="Copsey T."/>
            <person name="Cooper J."/>
            <person name="Coulson A."/>
            <person name="Craxton M."/>
            <person name="Dear S."/>
            <person name="Du Z."/>
            <person name="Durbin R."/>
            <person name="Favello A."/>
            <person name="Fraser A."/>
            <person name="Fulton L."/>
            <person name="Gardner A."/>
            <person name="Green P."/>
            <person name="Hawkins T."/>
            <person name="Hillier L."/>
            <person name="Jier M."/>
            <person name="Johnston L."/>
            <person name="Jones M."/>
            <person name="Kershaw J."/>
            <person name="Kirsten J."/>
            <person name="Laisster N."/>
            <person name="Latreille P."/>
            <person name="Lightning J."/>
            <person name="Lloyd C."/>
            <person name="Mortimore B."/>
            <person name="O'Callaghan M."/>
            <person name="Parsons J."/>
            <person name="Percy C."/>
            <person name="Rifken L."/>
            <person name="Roopra A."/>
            <person name="Saunders D."/>
            <person name="Shownkeen R."/>
            <person name="Sims M."/>
            <person name="Smaldon N."/>
            <person name="Smith A."/>
            <person name="Smith M."/>
            <person name="Sonnhammer E."/>
            <person name="Staden R."/>
            <person name="Sulston J."/>
            <person name="Thierry-Mieg J."/>
            <person name="Thomas K."/>
            <person name="Vaudin M."/>
            <person name="Vaughan K."/>
            <person name="Waterston R."/>
            <person name="Watson A."/>
            <person name="Weinstock L."/>
            <person name="Wilkinson-Sproat J."/>
            <person name="Wohldman P."/>
        </authorList>
    </citation>
    <scope>NUCLEOTIDE SEQUENCE [LARGE SCALE GENOMIC DNA]</scope>
    <source>
        <strain>Bristol N2</strain>
    </source>
</reference>
<reference key="2">
    <citation type="journal article" date="1998" name="Science">
        <title>Genome sequence of the nematode C. elegans: a platform for investigating biology.</title>
        <authorList>
            <consortium name="The C. elegans sequencing consortium"/>
        </authorList>
    </citation>
    <scope>NUCLEOTIDE SEQUENCE [LARGE SCALE GENOMIC DNA]</scope>
    <source>
        <strain>Bristol N2</strain>
    </source>
</reference>
<reference key="3">
    <citation type="journal article" date="2009" name="PLoS Genet.">
        <title>An ALS-linked mutant SOD1 produces a locomotor defect associated with aggregation and synaptic dysfunction when expressed in neurons of Caenorhabditis elegans.</title>
        <authorList>
            <person name="Wang J."/>
            <person name="Farr G.W."/>
            <person name="Hall D.H."/>
            <person name="Li F."/>
            <person name="Furtak K."/>
            <person name="Dreier L."/>
            <person name="Horwich A.L."/>
        </authorList>
    </citation>
    <scope>DISRUPTION PHENOTYPE</scope>
</reference>